<reference evidence="3" key="1">
    <citation type="journal article" date="2001" name="Biochem. Biophys. Res. Commun.">
        <title>Novel antifungal peptides from ceylon spinach seeds.</title>
        <authorList>
            <person name="Wang H."/>
            <person name="Ng T.B."/>
        </authorList>
    </citation>
    <scope>PROTEIN SEQUENCE</scope>
    <scope>FUNCTION</scope>
    <source>
        <tissue>Seed</tissue>
    </source>
</reference>
<evidence type="ECO:0000269" key="1">
    <source>
    </source>
</evidence>
<evidence type="ECO:0000303" key="2">
    <source>
    </source>
</evidence>
<evidence type="ECO:0000305" key="3"/>
<accession>P83187</accession>
<name>BRB_BASAL</name>
<dbReference type="GO" id="GO:0050832">
    <property type="term" value="P:defense response to fungus"/>
    <property type="evidence" value="ECO:0000314"/>
    <property type="project" value="UniProtKB"/>
</dbReference>
<dbReference type="GO" id="GO:0031640">
    <property type="term" value="P:killing of cells of another organism"/>
    <property type="evidence" value="ECO:0007669"/>
    <property type="project" value="UniProtKB-KW"/>
</dbReference>
<dbReference type="GO" id="GO:0017148">
    <property type="term" value="P:negative regulation of translation"/>
    <property type="evidence" value="ECO:0000314"/>
    <property type="project" value="UniProtKB"/>
</dbReference>
<dbReference type="GO" id="GO:0006805">
    <property type="term" value="P:xenobiotic metabolic process"/>
    <property type="evidence" value="ECO:0000314"/>
    <property type="project" value="UniProtKB"/>
</dbReference>
<proteinExistence type="evidence at protein level"/>
<keyword id="KW-0929">Antimicrobial</keyword>
<keyword id="KW-0903">Direct protein sequencing</keyword>
<keyword id="KW-0295">Fungicide</keyword>
<comment type="function">
    <text evidence="1">Possesses antifungal activity against B.cinerea, M.arachidicola and F.oxysporum but not C.comatus and R.solani. Inhibits HIV-1 reverse transcriptase and cell-free translation.</text>
</comment>
<protein>
    <recommendedName>
        <fullName>Beta-basrubin</fullName>
    </recommendedName>
</protein>
<feature type="peptide" id="PRO_0000045094" description="Beta-basrubin">
    <location>
        <begin position="1"/>
        <end position="16" status="greater than"/>
    </location>
</feature>
<feature type="non-terminal residue" evidence="2">
    <location>
        <position position="16"/>
    </location>
</feature>
<sequence length="16" mass="1952">KIMAKPSKFYEQLRGR</sequence>
<organism evidence="3">
    <name type="scientific">Basella alba</name>
    <name type="common">Malabar spinach</name>
    <name type="synonym">Basella rubra</name>
    <dbReference type="NCBI Taxonomy" id="3589"/>
    <lineage>
        <taxon>Eukaryota</taxon>
        <taxon>Viridiplantae</taxon>
        <taxon>Streptophyta</taxon>
        <taxon>Embryophyta</taxon>
        <taxon>Tracheophyta</taxon>
        <taxon>Spermatophyta</taxon>
        <taxon>Magnoliopsida</taxon>
        <taxon>eudicotyledons</taxon>
        <taxon>Gunneridae</taxon>
        <taxon>Pentapetalae</taxon>
        <taxon>Caryophyllales</taxon>
        <taxon>Cactineae</taxon>
        <taxon>Basellaceae</taxon>
        <taxon>Basella</taxon>
    </lineage>
</organism>